<keyword id="KW-0067">ATP-binding</keyword>
<keyword id="KW-0963">Cytoplasm</keyword>
<keyword id="KW-0235">DNA replication</keyword>
<keyword id="KW-0238">DNA-binding</keyword>
<keyword id="KW-0446">Lipid-binding</keyword>
<keyword id="KW-0547">Nucleotide-binding</keyword>
<name>DNAA_BUCAT</name>
<dbReference type="EMBL" id="CP001158">
    <property type="protein sequence ID" value="ACL29846.1"/>
    <property type="molecule type" value="Genomic_DNA"/>
</dbReference>
<dbReference type="RefSeq" id="WP_009873974.1">
    <property type="nucleotide sequence ID" value="NC_011834.1"/>
</dbReference>
<dbReference type="SMR" id="B8D6T1"/>
<dbReference type="KEGG" id="bau:BUAPTUC7_012"/>
<dbReference type="HOGENOM" id="CLU_026910_0_1_6"/>
<dbReference type="GO" id="GO:0005737">
    <property type="term" value="C:cytoplasm"/>
    <property type="evidence" value="ECO:0007669"/>
    <property type="project" value="UniProtKB-SubCell"/>
</dbReference>
<dbReference type="GO" id="GO:0005886">
    <property type="term" value="C:plasma membrane"/>
    <property type="evidence" value="ECO:0007669"/>
    <property type="project" value="TreeGrafter"/>
</dbReference>
<dbReference type="GO" id="GO:0005524">
    <property type="term" value="F:ATP binding"/>
    <property type="evidence" value="ECO:0007669"/>
    <property type="project" value="UniProtKB-UniRule"/>
</dbReference>
<dbReference type="GO" id="GO:0016887">
    <property type="term" value="F:ATP hydrolysis activity"/>
    <property type="evidence" value="ECO:0007669"/>
    <property type="project" value="InterPro"/>
</dbReference>
<dbReference type="GO" id="GO:0003688">
    <property type="term" value="F:DNA replication origin binding"/>
    <property type="evidence" value="ECO:0007669"/>
    <property type="project" value="UniProtKB-UniRule"/>
</dbReference>
<dbReference type="GO" id="GO:0008289">
    <property type="term" value="F:lipid binding"/>
    <property type="evidence" value="ECO:0007669"/>
    <property type="project" value="UniProtKB-KW"/>
</dbReference>
<dbReference type="GO" id="GO:0006270">
    <property type="term" value="P:DNA replication initiation"/>
    <property type="evidence" value="ECO:0007669"/>
    <property type="project" value="UniProtKB-UniRule"/>
</dbReference>
<dbReference type="GO" id="GO:0006275">
    <property type="term" value="P:regulation of DNA replication"/>
    <property type="evidence" value="ECO:0007669"/>
    <property type="project" value="UniProtKB-UniRule"/>
</dbReference>
<dbReference type="CDD" id="cd00009">
    <property type="entry name" value="AAA"/>
    <property type="match status" value="1"/>
</dbReference>
<dbReference type="CDD" id="cd06571">
    <property type="entry name" value="Bac_DnaA_C"/>
    <property type="match status" value="1"/>
</dbReference>
<dbReference type="FunFam" id="1.10.1750.10:FF:000001">
    <property type="entry name" value="Chromosomal replication initiator protein DnaA"/>
    <property type="match status" value="1"/>
</dbReference>
<dbReference type="FunFam" id="1.10.8.60:FF:000003">
    <property type="entry name" value="Chromosomal replication initiator protein DnaA"/>
    <property type="match status" value="1"/>
</dbReference>
<dbReference type="FunFam" id="3.40.50.300:FF:000103">
    <property type="entry name" value="Chromosomal replication initiator protein DnaA"/>
    <property type="match status" value="1"/>
</dbReference>
<dbReference type="Gene3D" id="1.10.1750.10">
    <property type="match status" value="1"/>
</dbReference>
<dbReference type="Gene3D" id="1.10.8.60">
    <property type="match status" value="1"/>
</dbReference>
<dbReference type="Gene3D" id="3.30.300.180">
    <property type="match status" value="1"/>
</dbReference>
<dbReference type="Gene3D" id="3.40.50.300">
    <property type="entry name" value="P-loop containing nucleotide triphosphate hydrolases"/>
    <property type="match status" value="1"/>
</dbReference>
<dbReference type="HAMAP" id="MF_00377">
    <property type="entry name" value="DnaA_bact"/>
    <property type="match status" value="1"/>
</dbReference>
<dbReference type="InterPro" id="IPR003593">
    <property type="entry name" value="AAA+_ATPase"/>
</dbReference>
<dbReference type="InterPro" id="IPR001957">
    <property type="entry name" value="Chromosome_initiator_DnaA"/>
</dbReference>
<dbReference type="InterPro" id="IPR020591">
    <property type="entry name" value="Chromosome_initiator_DnaA-like"/>
</dbReference>
<dbReference type="InterPro" id="IPR018312">
    <property type="entry name" value="Chromosome_initiator_DnaA_CS"/>
</dbReference>
<dbReference type="InterPro" id="IPR013159">
    <property type="entry name" value="DnaA_C"/>
</dbReference>
<dbReference type="InterPro" id="IPR013317">
    <property type="entry name" value="DnaA_dom"/>
</dbReference>
<dbReference type="InterPro" id="IPR024633">
    <property type="entry name" value="DnaA_N_dom"/>
</dbReference>
<dbReference type="InterPro" id="IPR038454">
    <property type="entry name" value="DnaA_N_sf"/>
</dbReference>
<dbReference type="InterPro" id="IPR027417">
    <property type="entry name" value="P-loop_NTPase"/>
</dbReference>
<dbReference type="InterPro" id="IPR010921">
    <property type="entry name" value="Trp_repressor/repl_initiator"/>
</dbReference>
<dbReference type="NCBIfam" id="TIGR00362">
    <property type="entry name" value="DnaA"/>
    <property type="match status" value="1"/>
</dbReference>
<dbReference type="PANTHER" id="PTHR30050">
    <property type="entry name" value="CHROMOSOMAL REPLICATION INITIATOR PROTEIN DNAA"/>
    <property type="match status" value="1"/>
</dbReference>
<dbReference type="PANTHER" id="PTHR30050:SF2">
    <property type="entry name" value="CHROMOSOMAL REPLICATION INITIATOR PROTEIN DNAA"/>
    <property type="match status" value="1"/>
</dbReference>
<dbReference type="Pfam" id="PF00308">
    <property type="entry name" value="Bac_DnaA"/>
    <property type="match status" value="1"/>
</dbReference>
<dbReference type="Pfam" id="PF08299">
    <property type="entry name" value="Bac_DnaA_C"/>
    <property type="match status" value="1"/>
</dbReference>
<dbReference type="Pfam" id="PF11638">
    <property type="entry name" value="DnaA_N"/>
    <property type="match status" value="1"/>
</dbReference>
<dbReference type="PRINTS" id="PR00051">
    <property type="entry name" value="DNAA"/>
</dbReference>
<dbReference type="SMART" id="SM00382">
    <property type="entry name" value="AAA"/>
    <property type="match status" value="1"/>
</dbReference>
<dbReference type="SMART" id="SM00760">
    <property type="entry name" value="Bac_DnaA_C"/>
    <property type="match status" value="1"/>
</dbReference>
<dbReference type="SUPFAM" id="SSF52540">
    <property type="entry name" value="P-loop containing nucleoside triphosphate hydrolases"/>
    <property type="match status" value="1"/>
</dbReference>
<dbReference type="SUPFAM" id="SSF48295">
    <property type="entry name" value="TrpR-like"/>
    <property type="match status" value="1"/>
</dbReference>
<dbReference type="PROSITE" id="PS01008">
    <property type="entry name" value="DNAA"/>
    <property type="match status" value="1"/>
</dbReference>
<evidence type="ECO:0000255" key="1">
    <source>
        <dbReference type="HAMAP-Rule" id="MF_00377"/>
    </source>
</evidence>
<accession>B8D6T1</accession>
<protein>
    <recommendedName>
        <fullName evidence="1">Chromosomal replication initiator protein DnaA</fullName>
    </recommendedName>
</protein>
<organism>
    <name type="scientific">Buchnera aphidicola subsp. Acyrthosiphon pisum (strain Tuc7)</name>
    <dbReference type="NCBI Taxonomy" id="561501"/>
    <lineage>
        <taxon>Bacteria</taxon>
        <taxon>Pseudomonadati</taxon>
        <taxon>Pseudomonadota</taxon>
        <taxon>Gammaproteobacteria</taxon>
        <taxon>Enterobacterales</taxon>
        <taxon>Erwiniaceae</taxon>
        <taxon>Buchnera</taxon>
    </lineage>
</organism>
<feature type="chain" id="PRO_1000189786" description="Chromosomal replication initiator protein DnaA">
    <location>
        <begin position="1"/>
        <end position="454"/>
    </location>
</feature>
<feature type="region of interest" description="Domain I, interacts with DnaA modulators" evidence="1">
    <location>
        <begin position="1"/>
        <end position="79"/>
    </location>
</feature>
<feature type="region of interest" description="Domain II" evidence="1">
    <location>
        <begin position="79"/>
        <end position="117"/>
    </location>
</feature>
<feature type="region of interest" description="Domain III, AAA+ region" evidence="1">
    <location>
        <begin position="118"/>
        <end position="334"/>
    </location>
</feature>
<feature type="region of interest" description="Domain IV, binds dsDNA" evidence="1">
    <location>
        <begin position="335"/>
        <end position="454"/>
    </location>
</feature>
<feature type="binding site" evidence="1">
    <location>
        <position position="162"/>
    </location>
    <ligand>
        <name>ATP</name>
        <dbReference type="ChEBI" id="CHEBI:30616"/>
    </ligand>
</feature>
<feature type="binding site" evidence="1">
    <location>
        <position position="164"/>
    </location>
    <ligand>
        <name>ATP</name>
        <dbReference type="ChEBI" id="CHEBI:30616"/>
    </ligand>
</feature>
<feature type="binding site" evidence="1">
    <location>
        <position position="165"/>
    </location>
    <ligand>
        <name>ATP</name>
        <dbReference type="ChEBI" id="CHEBI:30616"/>
    </ligand>
</feature>
<feature type="binding site" evidence="1">
    <location>
        <position position="166"/>
    </location>
    <ligand>
        <name>ATP</name>
        <dbReference type="ChEBI" id="CHEBI:30616"/>
    </ligand>
</feature>
<comment type="function">
    <text evidence="1">Plays an essential role in the initiation and regulation of chromosomal replication. ATP-DnaA binds to the origin of replication (oriC) to initiate formation of the DNA replication initiation complex once per cell cycle. Binds the DnaA box (a 9 base pair repeat at the origin) and separates the double-stranded (ds)DNA. Forms a right-handed helical filament on oriC DNA; dsDNA binds to the exterior of the filament while single-stranded (ss)DNA is stabiized in the filament's interior. The ATP-DnaA-oriC complex binds and stabilizes one strand of the AT-rich DNA unwinding element (DUE), permitting loading of DNA polymerase. After initiation quickly degrades to an ADP-DnaA complex that is not apt for DNA replication. Binds acidic phospholipids.</text>
</comment>
<comment type="subunit">
    <text evidence="1">Oligomerizes as a right-handed, spiral filament on DNA at oriC.</text>
</comment>
<comment type="subcellular location">
    <subcellularLocation>
        <location evidence="1">Cytoplasm</location>
    </subcellularLocation>
</comment>
<comment type="domain">
    <text evidence="1">Domain I is involved in oligomerization and binding regulators, domain II is flexibile and of varying length in different bacteria, domain III forms the AAA+ region, while domain IV binds dsDNA.</text>
</comment>
<comment type="similarity">
    <text evidence="1">Belongs to the DnaA family.</text>
</comment>
<sequence length="454" mass="52931">MSLCLWKQCLDRLQDELPNTEFSMWIRSLKAKLNNNILEIYAPNKFVLEWVKDKYLNHLKKILQDYCGTNSPLIKFEIYQIYKENKLKKNIENNNNNKNEKLIWSNIPKFKNLSYRSNINKRYNFQNFVEGKSNQLARSAAFQAARNPGNSYNPLFLYGATGLGKTHLLHAIGNEILSYKYDIKIIFMNSECFVQDMVKALKNNAIEKFKLYYRSVDALLIDDIQFFAHKERSQEEFFHTFNTLIEGNQQIILTSDRYPKEINGVEDRLKSRFSWGLTIAIDPPEIETRVAILIKKADQNNVILSNEVAFFIAKHLRSNVRELEGALNRVILNSRFTHRAITVDFAREALQDILAVQEKIITIDNIQKTVAKYYKIKVSDLLSKKRSRSIARPRQMAMAMAKKLTNHSLPEIGEAFSGRDHTTVLHACCKIEQLRKENHDIKKDFLNLIRTLSK</sequence>
<reference key="1">
    <citation type="journal article" date="2009" name="Science">
        <title>The dynamics and time scale of ongoing genomic erosion in symbiotic bacteria.</title>
        <authorList>
            <person name="Moran N.A."/>
            <person name="McLaughlin H.J."/>
            <person name="Sorek R."/>
        </authorList>
    </citation>
    <scope>NUCLEOTIDE SEQUENCE [LARGE SCALE GENOMIC DNA]</scope>
    <source>
        <strain>Tuc7</strain>
    </source>
</reference>
<proteinExistence type="inferred from homology"/>
<gene>
    <name evidence="1" type="primary">dnaA</name>
    <name type="ordered locus">BUAPTUC7_012</name>
</gene>